<comment type="function">
    <text evidence="1">Aminopeptidase that plays a central role in peptide trimming, a step required for the generation of most HLA class I-binding peptides. Peptide trimming is essential to customize longer precursor peptides to fit them to the correct length required for presentation on MHC class I molecules. Strongly prefers substrates 9-16 residues long. Rapidly degrades 13-mer to a 9-mer and then stops. Preferentially hydrolyzes the residue Leu and peptides with a hydrophobic C-terminus, while it has weak activity toward peptides with charged C-terminus. May play a role in the inactivation of peptide hormones. May be involved in the regulation of blood pressure through the inactivation of angiotensin II and/or the generation of bradykinin in the kidney (By similarity).</text>
</comment>
<comment type="cofactor">
    <cofactor evidence="1">
        <name>Zn(2+)</name>
        <dbReference type="ChEBI" id="CHEBI:29105"/>
    </cofactor>
    <text evidence="1">Binds 1 zinc ion per subunit.</text>
</comment>
<comment type="subunit">
    <text evidence="1">Monomer. May also exist as a heterodimer; with ERAP2. Interacts with RBMX (By similarity).</text>
</comment>
<comment type="subcellular location">
    <subcellularLocation>
        <location evidence="1">Endoplasmic reticulum membrane</location>
        <topology evidence="1">Single-pass type II membrane protein</topology>
    </subcellularLocation>
</comment>
<comment type="PTM">
    <text evidence="1">N-glycosylated.</text>
</comment>
<comment type="similarity">
    <text evidence="4">Belongs to the peptidase M1 family.</text>
</comment>
<feature type="chain" id="PRO_0000026752" description="Endoplasmic reticulum aminopeptidase 1">
    <location>
        <begin position="1"/>
        <end position="930"/>
    </location>
</feature>
<feature type="topological domain" description="Cytoplasmic" evidence="2">
    <location>
        <begin position="1"/>
        <end position="2"/>
    </location>
</feature>
<feature type="transmembrane region" description="Helical; Signal-anchor for type II membrane protein" evidence="2">
    <location>
        <begin position="3"/>
        <end position="23"/>
    </location>
</feature>
<feature type="topological domain" description="Lumenal" evidence="2">
    <location>
        <begin position="24"/>
        <end position="930"/>
    </location>
</feature>
<feature type="active site" evidence="3">
    <location>
        <position position="343"/>
    </location>
</feature>
<feature type="binding site" evidence="1">
    <location>
        <position position="172"/>
    </location>
    <ligand>
        <name>substrate</name>
    </ligand>
</feature>
<feature type="binding site" evidence="1">
    <location>
        <begin position="306"/>
        <end position="310"/>
    </location>
    <ligand>
        <name>substrate</name>
    </ligand>
</feature>
<feature type="binding site" evidence="3">
    <location>
        <position position="342"/>
    </location>
    <ligand>
        <name>Zn(2+)</name>
        <dbReference type="ChEBI" id="CHEBI:29105"/>
        <note>catalytic</note>
    </ligand>
</feature>
<feature type="binding site" evidence="3">
    <location>
        <position position="346"/>
    </location>
    <ligand>
        <name>Zn(2+)</name>
        <dbReference type="ChEBI" id="CHEBI:29105"/>
        <note>catalytic</note>
    </ligand>
</feature>
<feature type="binding site" evidence="3">
    <location>
        <position position="365"/>
    </location>
    <ligand>
        <name>Zn(2+)</name>
        <dbReference type="ChEBI" id="CHEBI:29105"/>
        <note>catalytic</note>
    </ligand>
</feature>
<feature type="site" description="Transition state stabilizer" evidence="1">
    <location>
        <position position="427"/>
    </location>
</feature>
<feature type="glycosylation site" description="N-linked (GlcNAc...) asparagine" evidence="2">
    <location>
        <position position="59"/>
    </location>
</feature>
<feature type="glycosylation site" description="N-linked (GlcNAc...) asparagine" evidence="2">
    <location>
        <position position="143"/>
    </location>
</feature>
<feature type="glycosylation site" description="N-linked (GlcNAc...) asparagine" evidence="2">
    <location>
        <position position="403"/>
    </location>
</feature>
<feature type="glycosylation site" description="N-linked (GlcNAc...) asparagine" evidence="2">
    <location>
        <position position="655"/>
    </location>
</feature>
<feature type="glycosylation site" description="N-linked (GlcNAc...) asparagine" evidence="2">
    <location>
        <position position="749"/>
    </location>
</feature>
<feature type="glycosylation site" description="N-linked (GlcNAc...) asparagine" evidence="2">
    <location>
        <position position="890"/>
    </location>
</feature>
<feature type="disulfide bond" evidence="1">
    <location>
        <begin position="393"/>
        <end position="432"/>
    </location>
</feature>
<feature type="disulfide bond" evidence="1">
    <location>
        <begin position="725"/>
        <end position="732"/>
    </location>
</feature>
<feature type="sequence conflict" description="In Ref. 1; AAG44260." evidence="4" ref="1">
    <original>KG</original>
    <variation>NA</variation>
    <location>
        <begin position="540"/>
        <end position="541"/>
    </location>
</feature>
<proteinExistence type="evidence at protein level"/>
<evidence type="ECO:0000250" key="1"/>
<evidence type="ECO:0000255" key="2"/>
<evidence type="ECO:0000255" key="3">
    <source>
        <dbReference type="PROSITE-ProRule" id="PRU10095"/>
    </source>
</evidence>
<evidence type="ECO:0000305" key="4"/>
<organism>
    <name type="scientific">Mus musculus</name>
    <name type="common">Mouse</name>
    <dbReference type="NCBI Taxonomy" id="10090"/>
    <lineage>
        <taxon>Eukaryota</taxon>
        <taxon>Metazoa</taxon>
        <taxon>Chordata</taxon>
        <taxon>Craniata</taxon>
        <taxon>Vertebrata</taxon>
        <taxon>Euteleostomi</taxon>
        <taxon>Mammalia</taxon>
        <taxon>Eutheria</taxon>
        <taxon>Euarchontoglires</taxon>
        <taxon>Glires</taxon>
        <taxon>Rodentia</taxon>
        <taxon>Myomorpha</taxon>
        <taxon>Muroidea</taxon>
        <taxon>Muridae</taxon>
        <taxon>Murinae</taxon>
        <taxon>Mus</taxon>
        <taxon>Mus</taxon>
    </lineage>
</organism>
<keyword id="KW-1064">Adaptive immunity</keyword>
<keyword id="KW-0031">Aminopeptidase</keyword>
<keyword id="KW-1015">Disulfide bond</keyword>
<keyword id="KW-0256">Endoplasmic reticulum</keyword>
<keyword id="KW-0325">Glycoprotein</keyword>
<keyword id="KW-0378">Hydrolase</keyword>
<keyword id="KW-0391">Immunity</keyword>
<keyword id="KW-0472">Membrane</keyword>
<keyword id="KW-0479">Metal-binding</keyword>
<keyword id="KW-0482">Metalloprotease</keyword>
<keyword id="KW-0645">Protease</keyword>
<keyword id="KW-1185">Reference proteome</keyword>
<keyword id="KW-0735">Signal-anchor</keyword>
<keyword id="KW-0812">Transmembrane</keyword>
<keyword id="KW-1133">Transmembrane helix</keyword>
<keyword id="KW-0862">Zinc</keyword>
<sequence length="930" mass="106599">MPSLLPLVLTFLSVSSPSWCQNSDIESLKASNGDSFPWNNMRLPEYMTPIHYDLMIHANLSTLTFWGKTEVEIIASRPTSTIIMHSHHLQISKATLRRGAGEMLSEEPLKVLEYPAHEQVALLAAQPLLAGSLYTVIIDYAANLSESFHGFYKSTYRTQEGEMRILAATQFEPTAARMAFPCFDEPALKASFSIKIKRDPRHLAISNMPLVKSVNVAEGLIEDHFDITVKMSTYLVAFIISDFKSVSKMTKSGVKVSVYAVPDKINQADYALDAAVTLLEFYEDYFNIPYPLPKQDLAAIPDFQSGAMENWGLTTYRESSLLYDKEKSSASSKLGITMIVSHELAHQWFGNLVTMEWWNDLWLNEGFAKFMEFVSVTVTHPELKVEDYFFGKCFNAMEVDALNSSHPVSTPVENPAQIREMFDDVSYEKGACILNMLRDYLSADTFKRGIVQYLQKYSYKNTKNEDLWNSMMHICPTDGTQTMDGFCSRSQHSSSTSHWRQEVVDVKTMMNTWTLQKGFPLITITVSGRNVHMKQEHYMKGSERFPETGYLWHVPLTFITSKSDSVQRFLLKTKTDVLILPEAVQWIKFNVGMNGYYIVHYADDGWASLSGLLKEAHTTISSNDRASLINNAFQLVSIEKLSIEKALDLTLYLKNETEIMPIFQALNELIPMYKLMEKRDMIEVETQFKDFLLKLLKDLIDKQTWTDEGSVSERMLRSQLLLLACVRNYQPCVQRAERYFREWKSSNGNMSIPIDVTLAVFAVGAQNTEGWDFLYSKYQSSLSSTEKSQIEFSLCTSKDPEKLQWLLDQSFKGEIIKTQEFPHILTLIGRNPVGYPLAWKFLRENWNKLVQKFELGSSSIAHMVMGTTDQFSTRARLEEVKGFFSSLKENGSQLRCVQQTIETIEENIRWMDKNFDKIRLWLQKEKPELL</sequence>
<accession>Q9EQH2</accession>
<accession>Q6GTP5</accession>
<accession>Q9ET63</accession>
<reference key="1">
    <citation type="submission" date="2000-01" db="EMBL/GenBank/DDBJ databases">
        <title>Molecular cloning of murine adipocyte-derived leucine aminopeptidase and its expression in adipocyte cell line, 3T3-L1 cells.</title>
        <authorList>
            <person name="Hattori A."/>
            <person name="Kitatani K."/>
            <person name="Matsumoto H."/>
            <person name="Mizutani S."/>
            <person name="Tsujimoto M."/>
        </authorList>
    </citation>
    <scope>NUCLEOTIDE SEQUENCE [MRNA]</scope>
</reference>
<reference key="2">
    <citation type="journal article" date="2002" name="Blood">
        <title>A mouse orthologue of puromycin-insensitive leucyl-specific aminopeptidase is expressed in endothelial cells and plays an important role in angiogenesis.</title>
        <authorList>
            <person name="Miyashita H."/>
            <person name="Yamazaki T."/>
            <person name="Akada T."/>
            <person name="Niizeki O."/>
            <person name="Ogawa M."/>
            <person name="Nishikawa S."/>
            <person name="Sato Y."/>
        </authorList>
    </citation>
    <scope>NUCLEOTIDE SEQUENCE [MRNA]</scope>
</reference>
<reference key="3">
    <citation type="journal article" date="2005" name="Science">
        <title>The transcriptional landscape of the mammalian genome.</title>
        <authorList>
            <person name="Carninci P."/>
            <person name="Kasukawa T."/>
            <person name="Katayama S."/>
            <person name="Gough J."/>
            <person name="Frith M.C."/>
            <person name="Maeda N."/>
            <person name="Oyama R."/>
            <person name="Ravasi T."/>
            <person name="Lenhard B."/>
            <person name="Wells C."/>
            <person name="Kodzius R."/>
            <person name="Shimokawa K."/>
            <person name="Bajic V.B."/>
            <person name="Brenner S.E."/>
            <person name="Batalov S."/>
            <person name="Forrest A.R."/>
            <person name="Zavolan M."/>
            <person name="Davis M.J."/>
            <person name="Wilming L.G."/>
            <person name="Aidinis V."/>
            <person name="Allen J.E."/>
            <person name="Ambesi-Impiombato A."/>
            <person name="Apweiler R."/>
            <person name="Aturaliya R.N."/>
            <person name="Bailey T.L."/>
            <person name="Bansal M."/>
            <person name="Baxter L."/>
            <person name="Beisel K.W."/>
            <person name="Bersano T."/>
            <person name="Bono H."/>
            <person name="Chalk A.M."/>
            <person name="Chiu K.P."/>
            <person name="Choudhary V."/>
            <person name="Christoffels A."/>
            <person name="Clutterbuck D.R."/>
            <person name="Crowe M.L."/>
            <person name="Dalla E."/>
            <person name="Dalrymple B.P."/>
            <person name="de Bono B."/>
            <person name="Della Gatta G."/>
            <person name="di Bernardo D."/>
            <person name="Down T."/>
            <person name="Engstrom P."/>
            <person name="Fagiolini M."/>
            <person name="Faulkner G."/>
            <person name="Fletcher C.F."/>
            <person name="Fukushima T."/>
            <person name="Furuno M."/>
            <person name="Futaki S."/>
            <person name="Gariboldi M."/>
            <person name="Georgii-Hemming P."/>
            <person name="Gingeras T.R."/>
            <person name="Gojobori T."/>
            <person name="Green R.E."/>
            <person name="Gustincich S."/>
            <person name="Harbers M."/>
            <person name="Hayashi Y."/>
            <person name="Hensch T.K."/>
            <person name="Hirokawa N."/>
            <person name="Hill D."/>
            <person name="Huminiecki L."/>
            <person name="Iacono M."/>
            <person name="Ikeo K."/>
            <person name="Iwama A."/>
            <person name="Ishikawa T."/>
            <person name="Jakt M."/>
            <person name="Kanapin A."/>
            <person name="Katoh M."/>
            <person name="Kawasawa Y."/>
            <person name="Kelso J."/>
            <person name="Kitamura H."/>
            <person name="Kitano H."/>
            <person name="Kollias G."/>
            <person name="Krishnan S.P."/>
            <person name="Kruger A."/>
            <person name="Kummerfeld S.K."/>
            <person name="Kurochkin I.V."/>
            <person name="Lareau L.F."/>
            <person name="Lazarevic D."/>
            <person name="Lipovich L."/>
            <person name="Liu J."/>
            <person name="Liuni S."/>
            <person name="McWilliam S."/>
            <person name="Madan Babu M."/>
            <person name="Madera M."/>
            <person name="Marchionni L."/>
            <person name="Matsuda H."/>
            <person name="Matsuzawa S."/>
            <person name="Miki H."/>
            <person name="Mignone F."/>
            <person name="Miyake S."/>
            <person name="Morris K."/>
            <person name="Mottagui-Tabar S."/>
            <person name="Mulder N."/>
            <person name="Nakano N."/>
            <person name="Nakauchi H."/>
            <person name="Ng P."/>
            <person name="Nilsson R."/>
            <person name="Nishiguchi S."/>
            <person name="Nishikawa S."/>
            <person name="Nori F."/>
            <person name="Ohara O."/>
            <person name="Okazaki Y."/>
            <person name="Orlando V."/>
            <person name="Pang K.C."/>
            <person name="Pavan W.J."/>
            <person name="Pavesi G."/>
            <person name="Pesole G."/>
            <person name="Petrovsky N."/>
            <person name="Piazza S."/>
            <person name="Reed J."/>
            <person name="Reid J.F."/>
            <person name="Ring B.Z."/>
            <person name="Ringwald M."/>
            <person name="Rost B."/>
            <person name="Ruan Y."/>
            <person name="Salzberg S.L."/>
            <person name="Sandelin A."/>
            <person name="Schneider C."/>
            <person name="Schoenbach C."/>
            <person name="Sekiguchi K."/>
            <person name="Semple C.A."/>
            <person name="Seno S."/>
            <person name="Sessa L."/>
            <person name="Sheng Y."/>
            <person name="Shibata Y."/>
            <person name="Shimada H."/>
            <person name="Shimada K."/>
            <person name="Silva D."/>
            <person name="Sinclair B."/>
            <person name="Sperling S."/>
            <person name="Stupka E."/>
            <person name="Sugiura K."/>
            <person name="Sultana R."/>
            <person name="Takenaka Y."/>
            <person name="Taki K."/>
            <person name="Tammoja K."/>
            <person name="Tan S.L."/>
            <person name="Tang S."/>
            <person name="Taylor M.S."/>
            <person name="Tegner J."/>
            <person name="Teichmann S.A."/>
            <person name="Ueda H.R."/>
            <person name="van Nimwegen E."/>
            <person name="Verardo R."/>
            <person name="Wei C.L."/>
            <person name="Yagi K."/>
            <person name="Yamanishi H."/>
            <person name="Zabarovsky E."/>
            <person name="Zhu S."/>
            <person name="Zimmer A."/>
            <person name="Hide W."/>
            <person name="Bult C."/>
            <person name="Grimmond S.M."/>
            <person name="Teasdale R.D."/>
            <person name="Liu E.T."/>
            <person name="Brusic V."/>
            <person name="Quackenbush J."/>
            <person name="Wahlestedt C."/>
            <person name="Mattick J.S."/>
            <person name="Hume D.A."/>
            <person name="Kai C."/>
            <person name="Sasaki D."/>
            <person name="Tomaru Y."/>
            <person name="Fukuda S."/>
            <person name="Kanamori-Katayama M."/>
            <person name="Suzuki M."/>
            <person name="Aoki J."/>
            <person name="Arakawa T."/>
            <person name="Iida J."/>
            <person name="Imamura K."/>
            <person name="Itoh M."/>
            <person name="Kato T."/>
            <person name="Kawaji H."/>
            <person name="Kawagashira N."/>
            <person name="Kawashima T."/>
            <person name="Kojima M."/>
            <person name="Kondo S."/>
            <person name="Konno H."/>
            <person name="Nakano K."/>
            <person name="Ninomiya N."/>
            <person name="Nishio T."/>
            <person name="Okada M."/>
            <person name="Plessy C."/>
            <person name="Shibata K."/>
            <person name="Shiraki T."/>
            <person name="Suzuki S."/>
            <person name="Tagami M."/>
            <person name="Waki K."/>
            <person name="Watahiki A."/>
            <person name="Okamura-Oho Y."/>
            <person name="Suzuki H."/>
            <person name="Kawai J."/>
            <person name="Hayashizaki Y."/>
        </authorList>
    </citation>
    <scope>NUCLEOTIDE SEQUENCE [LARGE SCALE MRNA]</scope>
</reference>
<reference key="4">
    <citation type="submission" date="2005-07" db="EMBL/GenBank/DDBJ databases">
        <authorList>
            <person name="Mural R.J."/>
            <person name="Adams M.D."/>
            <person name="Myers E.W."/>
            <person name="Smith H.O."/>
            <person name="Venter J.C."/>
        </authorList>
    </citation>
    <scope>NUCLEOTIDE SEQUENCE [LARGE SCALE GENOMIC DNA]</scope>
</reference>
<reference key="5">
    <citation type="journal article" date="2004" name="Genome Res.">
        <title>The status, quality, and expansion of the NIH full-length cDNA project: the Mammalian Gene Collection (MGC).</title>
        <authorList>
            <consortium name="The MGC Project Team"/>
        </authorList>
    </citation>
    <scope>NUCLEOTIDE SEQUENCE [LARGE SCALE MRNA]</scope>
    <source>
        <strain>FVB/N</strain>
        <tissue>Colon</tissue>
    </source>
</reference>
<reference key="6">
    <citation type="journal article" date="2010" name="Cell">
        <title>A tissue-specific atlas of mouse protein phosphorylation and expression.</title>
        <authorList>
            <person name="Huttlin E.L."/>
            <person name="Jedrychowski M.P."/>
            <person name="Elias J.E."/>
            <person name="Goswami T."/>
            <person name="Rad R."/>
            <person name="Beausoleil S.A."/>
            <person name="Villen J."/>
            <person name="Haas W."/>
            <person name="Sowa M.E."/>
            <person name="Gygi S.P."/>
        </authorList>
    </citation>
    <scope>IDENTIFICATION BY MASS SPECTROMETRY [LARGE SCALE ANALYSIS]</scope>
    <source>
        <tissue>Brain</tissue>
        <tissue>Brown adipose tissue</tissue>
        <tissue>Heart</tissue>
        <tissue>Kidney</tissue>
        <tissue>Liver</tissue>
        <tissue>Lung</tissue>
        <tissue>Pancreas</tissue>
        <tissue>Spleen</tissue>
        <tissue>Testis</tissue>
    </source>
</reference>
<gene>
    <name type="primary">Erap1</name>
    <name type="synonym">Appils</name>
    <name type="synonym">Arts1</name>
</gene>
<name>ERAP1_MOUSE</name>
<dbReference type="EC" id="3.4.11.-"/>
<dbReference type="EMBL" id="AF227511">
    <property type="protein sequence ID" value="AAG44260.1"/>
    <property type="molecule type" value="mRNA"/>
</dbReference>
<dbReference type="EMBL" id="AB047552">
    <property type="protein sequence ID" value="BAB11982.1"/>
    <property type="molecule type" value="mRNA"/>
</dbReference>
<dbReference type="EMBL" id="AK030329">
    <property type="protein sequence ID" value="BAC26904.1"/>
    <property type="molecule type" value="mRNA"/>
</dbReference>
<dbReference type="EMBL" id="CH466563">
    <property type="protein sequence ID" value="EDL37102.1"/>
    <property type="molecule type" value="Genomic_DNA"/>
</dbReference>
<dbReference type="EMBL" id="BC046610">
    <property type="protein sequence ID" value="AAH46610.1"/>
    <property type="molecule type" value="mRNA"/>
</dbReference>
<dbReference type="CCDS" id="CCDS26647.1"/>
<dbReference type="RefSeq" id="NP_001413509.1">
    <property type="nucleotide sequence ID" value="NM_001426580.1"/>
</dbReference>
<dbReference type="RefSeq" id="NP_109636.1">
    <property type="nucleotide sequence ID" value="NM_030711.6"/>
</dbReference>
<dbReference type="RefSeq" id="XP_006517539.1">
    <property type="nucleotide sequence ID" value="XM_006517476.5"/>
</dbReference>
<dbReference type="SMR" id="Q9EQH2"/>
<dbReference type="BioGRID" id="219837">
    <property type="interactions" value="7"/>
</dbReference>
<dbReference type="FunCoup" id="Q9EQH2">
    <property type="interactions" value="1530"/>
</dbReference>
<dbReference type="IntAct" id="Q9EQH2">
    <property type="interactions" value="1"/>
</dbReference>
<dbReference type="MINT" id="Q9EQH2"/>
<dbReference type="STRING" id="10090.ENSMUSP00000133166"/>
<dbReference type="ChEMBL" id="CHEMBL3414412"/>
<dbReference type="MEROPS" id="M01.018"/>
<dbReference type="GlyConnect" id="2283">
    <property type="glycosylation" value="2 N-Linked glycans (1 site)"/>
</dbReference>
<dbReference type="GlyCosmos" id="Q9EQH2">
    <property type="glycosylation" value="6 sites, 2 glycans"/>
</dbReference>
<dbReference type="GlyGen" id="Q9EQH2">
    <property type="glycosylation" value="8 sites, 4 N-linked glycans (2 sites), 1 O-linked glycan (1 site)"/>
</dbReference>
<dbReference type="iPTMnet" id="Q9EQH2"/>
<dbReference type="PhosphoSitePlus" id="Q9EQH2"/>
<dbReference type="SwissPalm" id="Q9EQH2"/>
<dbReference type="CPTAC" id="non-CPTAC-3804"/>
<dbReference type="jPOST" id="Q9EQH2"/>
<dbReference type="PaxDb" id="10090-ENSMUSP00000133166"/>
<dbReference type="PeptideAtlas" id="Q9EQH2"/>
<dbReference type="ProteomicsDB" id="275671"/>
<dbReference type="Pumba" id="Q9EQH2"/>
<dbReference type="Antibodypedia" id="25075">
    <property type="antibodies" value="377 antibodies from 36 providers"/>
</dbReference>
<dbReference type="DNASU" id="80898"/>
<dbReference type="Ensembl" id="ENSMUST00000169114.3">
    <property type="protein sequence ID" value="ENSMUSP00000133166.2"/>
    <property type="gene ID" value="ENSMUSG00000021583.8"/>
</dbReference>
<dbReference type="GeneID" id="80898"/>
<dbReference type="KEGG" id="mmu:80898"/>
<dbReference type="UCSC" id="uc007rfi.1">
    <property type="organism name" value="mouse"/>
</dbReference>
<dbReference type="AGR" id="MGI:1933403"/>
<dbReference type="CTD" id="51752"/>
<dbReference type="MGI" id="MGI:1933403">
    <property type="gene designation" value="Erap1"/>
</dbReference>
<dbReference type="VEuPathDB" id="HostDB:ENSMUSG00000021583"/>
<dbReference type="eggNOG" id="KOG1046">
    <property type="taxonomic scope" value="Eukaryota"/>
</dbReference>
<dbReference type="GeneTree" id="ENSGT00940000159086"/>
<dbReference type="HOGENOM" id="CLU_003705_0_1_1"/>
<dbReference type="InParanoid" id="Q9EQH2"/>
<dbReference type="OMA" id="NGVCIRN"/>
<dbReference type="OrthoDB" id="10031169at2759"/>
<dbReference type="PhylomeDB" id="Q9EQH2"/>
<dbReference type="TreeFam" id="TF300395"/>
<dbReference type="BRENDA" id="3.4.11.22">
    <property type="organism ID" value="3474"/>
</dbReference>
<dbReference type="Reactome" id="R-MMU-983170">
    <property type="pathway name" value="Antigen Presentation: Folding, assembly and peptide loading of class I MHC"/>
</dbReference>
<dbReference type="BioGRID-ORCS" id="80898">
    <property type="hits" value="13 hits in 80 CRISPR screens"/>
</dbReference>
<dbReference type="ChiTaRS" id="Erap1">
    <property type="organism name" value="mouse"/>
</dbReference>
<dbReference type="PRO" id="PR:Q9EQH2"/>
<dbReference type="Proteomes" id="UP000000589">
    <property type="component" value="Chromosome 13"/>
</dbReference>
<dbReference type="RNAct" id="Q9EQH2">
    <property type="molecule type" value="protein"/>
</dbReference>
<dbReference type="Bgee" id="ENSMUSG00000021583">
    <property type="expression patterns" value="Expressed in duodenum and 165 other cell types or tissues"/>
</dbReference>
<dbReference type="ExpressionAtlas" id="Q9EQH2">
    <property type="expression patterns" value="baseline and differential"/>
</dbReference>
<dbReference type="GO" id="GO:0005737">
    <property type="term" value="C:cytoplasm"/>
    <property type="evidence" value="ECO:0000314"/>
    <property type="project" value="MGI"/>
</dbReference>
<dbReference type="GO" id="GO:0005789">
    <property type="term" value="C:endoplasmic reticulum membrane"/>
    <property type="evidence" value="ECO:0007669"/>
    <property type="project" value="UniProtKB-SubCell"/>
</dbReference>
<dbReference type="GO" id="GO:0005576">
    <property type="term" value="C:extracellular region"/>
    <property type="evidence" value="ECO:0000250"/>
    <property type="project" value="UniProtKB"/>
</dbReference>
<dbReference type="GO" id="GO:0004177">
    <property type="term" value="F:aminopeptidase activity"/>
    <property type="evidence" value="ECO:0000314"/>
    <property type="project" value="MGI"/>
</dbReference>
<dbReference type="GO" id="GO:0005138">
    <property type="term" value="F:interleukin-6 receptor binding"/>
    <property type="evidence" value="ECO:0000250"/>
    <property type="project" value="UniProtKB"/>
</dbReference>
<dbReference type="GO" id="GO:0008235">
    <property type="term" value="F:metalloexopeptidase activity"/>
    <property type="evidence" value="ECO:0000250"/>
    <property type="project" value="UniProtKB"/>
</dbReference>
<dbReference type="GO" id="GO:0008233">
    <property type="term" value="F:peptidase activity"/>
    <property type="evidence" value="ECO:0000315"/>
    <property type="project" value="MGI"/>
</dbReference>
<dbReference type="GO" id="GO:0008270">
    <property type="term" value="F:zinc ion binding"/>
    <property type="evidence" value="ECO:0007669"/>
    <property type="project" value="InterPro"/>
</dbReference>
<dbReference type="GO" id="GO:0002250">
    <property type="term" value="P:adaptive immune response"/>
    <property type="evidence" value="ECO:0007669"/>
    <property type="project" value="UniProtKB-KW"/>
</dbReference>
<dbReference type="GO" id="GO:0006509">
    <property type="term" value="P:membrane protein ectodomain proteolysis"/>
    <property type="evidence" value="ECO:0000250"/>
    <property type="project" value="UniProtKB"/>
</dbReference>
<dbReference type="GO" id="GO:0045766">
    <property type="term" value="P:positive regulation of angiogenesis"/>
    <property type="evidence" value="ECO:0000315"/>
    <property type="project" value="MGI"/>
</dbReference>
<dbReference type="GO" id="GO:0006508">
    <property type="term" value="P:proteolysis"/>
    <property type="evidence" value="ECO:0000314"/>
    <property type="project" value="MGI"/>
</dbReference>
<dbReference type="CDD" id="cd09601">
    <property type="entry name" value="M1_APN-Q_like"/>
    <property type="match status" value="1"/>
</dbReference>
<dbReference type="FunFam" id="1.10.390.10:FF:000007">
    <property type="entry name" value="Aminopeptidase"/>
    <property type="match status" value="1"/>
</dbReference>
<dbReference type="FunFam" id="1.25.50.20:FF:000003">
    <property type="entry name" value="Leucyl-cystinyl aminopeptidase"/>
    <property type="match status" value="1"/>
</dbReference>
<dbReference type="FunFam" id="2.60.40.1730:FF:000001">
    <property type="entry name" value="Leucyl-cystinyl aminopeptidase"/>
    <property type="match status" value="1"/>
</dbReference>
<dbReference type="FunFam" id="2.60.40.1910:FF:000001">
    <property type="entry name" value="Leucyl-cystinyl aminopeptidase"/>
    <property type="match status" value="1"/>
</dbReference>
<dbReference type="Gene3D" id="1.25.50.20">
    <property type="match status" value="1"/>
</dbReference>
<dbReference type="Gene3D" id="2.60.40.1910">
    <property type="match status" value="1"/>
</dbReference>
<dbReference type="Gene3D" id="1.10.390.10">
    <property type="entry name" value="Neutral Protease Domain 2"/>
    <property type="match status" value="1"/>
</dbReference>
<dbReference type="Gene3D" id="2.60.40.1730">
    <property type="entry name" value="tricorn interacting facor f3 domain"/>
    <property type="match status" value="1"/>
</dbReference>
<dbReference type="InterPro" id="IPR045357">
    <property type="entry name" value="Aminopeptidase_N-like_N"/>
</dbReference>
<dbReference type="InterPro" id="IPR042097">
    <property type="entry name" value="Aminopeptidase_N-like_N_sf"/>
</dbReference>
<dbReference type="InterPro" id="IPR024571">
    <property type="entry name" value="ERAP1-like_C_dom"/>
</dbReference>
<dbReference type="InterPro" id="IPR034016">
    <property type="entry name" value="M1_APN-typ"/>
</dbReference>
<dbReference type="InterPro" id="IPR001930">
    <property type="entry name" value="Peptidase_M1"/>
</dbReference>
<dbReference type="InterPro" id="IPR050344">
    <property type="entry name" value="Peptidase_M1_aminopeptidases"/>
</dbReference>
<dbReference type="InterPro" id="IPR014782">
    <property type="entry name" value="Peptidase_M1_dom"/>
</dbReference>
<dbReference type="InterPro" id="IPR027268">
    <property type="entry name" value="Peptidase_M4/M1_CTD_sf"/>
</dbReference>
<dbReference type="PANTHER" id="PTHR11533:SF156">
    <property type="entry name" value="ENDOPLASMIC RETICULUM AMINOPEPTIDASE 1"/>
    <property type="match status" value="1"/>
</dbReference>
<dbReference type="PANTHER" id="PTHR11533">
    <property type="entry name" value="PROTEASE M1 ZINC METALLOPROTEASE"/>
    <property type="match status" value="1"/>
</dbReference>
<dbReference type="Pfam" id="PF11838">
    <property type="entry name" value="ERAP1_C"/>
    <property type="match status" value="1"/>
</dbReference>
<dbReference type="Pfam" id="PF01433">
    <property type="entry name" value="Peptidase_M1"/>
    <property type="match status" value="1"/>
</dbReference>
<dbReference type="Pfam" id="PF17900">
    <property type="entry name" value="Peptidase_M1_N"/>
    <property type="match status" value="1"/>
</dbReference>
<dbReference type="PRINTS" id="PR00756">
    <property type="entry name" value="ALADIPTASE"/>
</dbReference>
<dbReference type="SUPFAM" id="SSF63737">
    <property type="entry name" value="Leukotriene A4 hydrolase N-terminal domain"/>
    <property type="match status" value="1"/>
</dbReference>
<dbReference type="SUPFAM" id="SSF55486">
    <property type="entry name" value="Metalloproteases ('zincins'), catalytic domain"/>
    <property type="match status" value="1"/>
</dbReference>
<dbReference type="PROSITE" id="PS00142">
    <property type="entry name" value="ZINC_PROTEASE"/>
    <property type="match status" value="1"/>
</dbReference>
<protein>
    <recommendedName>
        <fullName>Endoplasmic reticulum aminopeptidase 1</fullName>
        <ecNumber>3.4.11.-</ecNumber>
    </recommendedName>
    <alternativeName>
        <fullName>ARTS-1</fullName>
    </alternativeName>
    <alternativeName>
        <fullName>Adipocyte-derived leucine aminopeptidase</fullName>
        <shortName>A-LAP</shortName>
    </alternativeName>
    <alternativeName>
        <fullName>Aminopeptidase PILS</fullName>
    </alternativeName>
    <alternativeName>
        <fullName>Puromycin-insensitive leucyl-specific aminopeptidase</fullName>
        <shortName>PILS-AP</shortName>
    </alternativeName>
    <alternativeName>
        <fullName>VEGF-induced aminopeptidase</fullName>
    </alternativeName>
</protein>